<name>RNH2_CHLL3</name>
<organism>
    <name type="scientific">Chlorobium luteolum (strain DSM 273 / BCRC 81028 / 2530)</name>
    <name type="common">Pelodictyon luteolum</name>
    <dbReference type="NCBI Taxonomy" id="319225"/>
    <lineage>
        <taxon>Bacteria</taxon>
        <taxon>Pseudomonadati</taxon>
        <taxon>Chlorobiota</taxon>
        <taxon>Chlorobiia</taxon>
        <taxon>Chlorobiales</taxon>
        <taxon>Chlorobiaceae</taxon>
        <taxon>Chlorobium/Pelodictyon group</taxon>
        <taxon>Pelodictyon</taxon>
    </lineage>
</organism>
<protein>
    <recommendedName>
        <fullName evidence="1">Ribonuclease HII</fullName>
        <shortName evidence="1">RNase HII</shortName>
        <ecNumber evidence="1">3.1.26.4</ecNumber>
    </recommendedName>
</protein>
<reference key="1">
    <citation type="submission" date="2005-08" db="EMBL/GenBank/DDBJ databases">
        <title>Complete sequence of Pelodictyon luteolum DSM 273.</title>
        <authorList>
            <consortium name="US DOE Joint Genome Institute"/>
            <person name="Copeland A."/>
            <person name="Lucas S."/>
            <person name="Lapidus A."/>
            <person name="Barry K."/>
            <person name="Detter J.C."/>
            <person name="Glavina T."/>
            <person name="Hammon N."/>
            <person name="Israni S."/>
            <person name="Pitluck S."/>
            <person name="Bryant D."/>
            <person name="Schmutz J."/>
            <person name="Larimer F."/>
            <person name="Land M."/>
            <person name="Kyrpides N."/>
            <person name="Ivanova N."/>
            <person name="Richardson P."/>
        </authorList>
    </citation>
    <scope>NUCLEOTIDE SEQUENCE [LARGE SCALE GENOMIC DNA]</scope>
    <source>
        <strain>DSM 273 / BCRC 81028 / 2530</strain>
    </source>
</reference>
<evidence type="ECO:0000255" key="1">
    <source>
        <dbReference type="HAMAP-Rule" id="MF_00052"/>
    </source>
</evidence>
<evidence type="ECO:0000255" key="2">
    <source>
        <dbReference type="PROSITE-ProRule" id="PRU01319"/>
    </source>
</evidence>
<proteinExistence type="inferred from homology"/>
<feature type="chain" id="PRO_0000235748" description="Ribonuclease HII">
    <location>
        <begin position="1"/>
        <end position="208"/>
    </location>
</feature>
<feature type="domain" description="RNase H type-2" evidence="2">
    <location>
        <begin position="17"/>
        <end position="208"/>
    </location>
</feature>
<feature type="binding site" evidence="1">
    <location>
        <position position="23"/>
    </location>
    <ligand>
        <name>a divalent metal cation</name>
        <dbReference type="ChEBI" id="CHEBI:60240"/>
    </ligand>
</feature>
<feature type="binding site" evidence="1">
    <location>
        <position position="24"/>
    </location>
    <ligand>
        <name>a divalent metal cation</name>
        <dbReference type="ChEBI" id="CHEBI:60240"/>
    </ligand>
</feature>
<feature type="binding site" evidence="1">
    <location>
        <position position="120"/>
    </location>
    <ligand>
        <name>a divalent metal cation</name>
        <dbReference type="ChEBI" id="CHEBI:60240"/>
    </ligand>
</feature>
<sequence>MMPMDTVREYLLWNDFLRVCGIDEAGRGPLAGPVVAAAVVFPRWFSPDEGILRRLNDSKKLTPSLRRELAPAIREEAECWAVEAVDHETIDRINILRATMLAMNRAAESLPRQPDLLLIDGNRFTPNIPVPYQTIVGGDALVFSIAAASVLAKTERDRMMEEYAERYPEYGFERNAGYGTREHVEAIRRHGRSPIHRTSFRLRQLGEK</sequence>
<keyword id="KW-0963">Cytoplasm</keyword>
<keyword id="KW-0255">Endonuclease</keyword>
<keyword id="KW-0378">Hydrolase</keyword>
<keyword id="KW-0464">Manganese</keyword>
<keyword id="KW-0479">Metal-binding</keyword>
<keyword id="KW-0540">Nuclease</keyword>
<keyword id="KW-1185">Reference proteome</keyword>
<dbReference type="EC" id="3.1.26.4" evidence="1"/>
<dbReference type="EMBL" id="CP000096">
    <property type="protein sequence ID" value="ABB22903.1"/>
    <property type="molecule type" value="Genomic_DNA"/>
</dbReference>
<dbReference type="SMR" id="Q3B6X8"/>
<dbReference type="STRING" id="319225.Plut_0011"/>
<dbReference type="KEGG" id="plt:Plut_0011"/>
<dbReference type="eggNOG" id="COG0164">
    <property type="taxonomic scope" value="Bacteria"/>
</dbReference>
<dbReference type="HOGENOM" id="CLU_036532_3_2_10"/>
<dbReference type="OrthoDB" id="9803420at2"/>
<dbReference type="Proteomes" id="UP000002709">
    <property type="component" value="Chromosome"/>
</dbReference>
<dbReference type="GO" id="GO:0005737">
    <property type="term" value="C:cytoplasm"/>
    <property type="evidence" value="ECO:0007669"/>
    <property type="project" value="UniProtKB-SubCell"/>
</dbReference>
<dbReference type="GO" id="GO:0032299">
    <property type="term" value="C:ribonuclease H2 complex"/>
    <property type="evidence" value="ECO:0007669"/>
    <property type="project" value="TreeGrafter"/>
</dbReference>
<dbReference type="GO" id="GO:0030145">
    <property type="term" value="F:manganese ion binding"/>
    <property type="evidence" value="ECO:0007669"/>
    <property type="project" value="UniProtKB-UniRule"/>
</dbReference>
<dbReference type="GO" id="GO:0003723">
    <property type="term" value="F:RNA binding"/>
    <property type="evidence" value="ECO:0007669"/>
    <property type="project" value="InterPro"/>
</dbReference>
<dbReference type="GO" id="GO:0004523">
    <property type="term" value="F:RNA-DNA hybrid ribonuclease activity"/>
    <property type="evidence" value="ECO:0007669"/>
    <property type="project" value="UniProtKB-UniRule"/>
</dbReference>
<dbReference type="GO" id="GO:0043137">
    <property type="term" value="P:DNA replication, removal of RNA primer"/>
    <property type="evidence" value="ECO:0007669"/>
    <property type="project" value="TreeGrafter"/>
</dbReference>
<dbReference type="GO" id="GO:0006298">
    <property type="term" value="P:mismatch repair"/>
    <property type="evidence" value="ECO:0007669"/>
    <property type="project" value="TreeGrafter"/>
</dbReference>
<dbReference type="CDD" id="cd07182">
    <property type="entry name" value="RNase_HII_bacteria_HII_like"/>
    <property type="match status" value="1"/>
</dbReference>
<dbReference type="Gene3D" id="3.30.420.10">
    <property type="entry name" value="Ribonuclease H-like superfamily/Ribonuclease H"/>
    <property type="match status" value="1"/>
</dbReference>
<dbReference type="HAMAP" id="MF_00052_B">
    <property type="entry name" value="RNase_HII_B"/>
    <property type="match status" value="1"/>
</dbReference>
<dbReference type="InterPro" id="IPR022898">
    <property type="entry name" value="RNase_HII"/>
</dbReference>
<dbReference type="InterPro" id="IPR001352">
    <property type="entry name" value="RNase_HII/HIII"/>
</dbReference>
<dbReference type="InterPro" id="IPR024567">
    <property type="entry name" value="RNase_HII/HIII_dom"/>
</dbReference>
<dbReference type="InterPro" id="IPR012337">
    <property type="entry name" value="RNaseH-like_sf"/>
</dbReference>
<dbReference type="InterPro" id="IPR036397">
    <property type="entry name" value="RNaseH_sf"/>
</dbReference>
<dbReference type="NCBIfam" id="NF000595">
    <property type="entry name" value="PRK00015.1-3"/>
    <property type="match status" value="1"/>
</dbReference>
<dbReference type="PANTHER" id="PTHR10954">
    <property type="entry name" value="RIBONUCLEASE H2 SUBUNIT A"/>
    <property type="match status" value="1"/>
</dbReference>
<dbReference type="PANTHER" id="PTHR10954:SF18">
    <property type="entry name" value="RIBONUCLEASE HII"/>
    <property type="match status" value="1"/>
</dbReference>
<dbReference type="Pfam" id="PF01351">
    <property type="entry name" value="RNase_HII"/>
    <property type="match status" value="1"/>
</dbReference>
<dbReference type="SUPFAM" id="SSF53098">
    <property type="entry name" value="Ribonuclease H-like"/>
    <property type="match status" value="1"/>
</dbReference>
<dbReference type="PROSITE" id="PS51975">
    <property type="entry name" value="RNASE_H_2"/>
    <property type="match status" value="1"/>
</dbReference>
<accession>Q3B6X8</accession>
<comment type="function">
    <text evidence="1">Endonuclease that specifically degrades the RNA of RNA-DNA hybrids.</text>
</comment>
<comment type="catalytic activity">
    <reaction evidence="1">
        <text>Endonucleolytic cleavage to 5'-phosphomonoester.</text>
        <dbReference type="EC" id="3.1.26.4"/>
    </reaction>
</comment>
<comment type="cofactor">
    <cofactor evidence="1">
        <name>Mn(2+)</name>
        <dbReference type="ChEBI" id="CHEBI:29035"/>
    </cofactor>
    <cofactor evidence="1">
        <name>Mg(2+)</name>
        <dbReference type="ChEBI" id="CHEBI:18420"/>
    </cofactor>
    <text evidence="1">Manganese or magnesium. Binds 1 divalent metal ion per monomer in the absence of substrate. May bind a second metal ion after substrate binding.</text>
</comment>
<comment type="subcellular location">
    <subcellularLocation>
        <location evidence="1">Cytoplasm</location>
    </subcellularLocation>
</comment>
<comment type="similarity">
    <text evidence="1">Belongs to the RNase HII family.</text>
</comment>
<gene>
    <name evidence="1" type="primary">rnhB</name>
    <name type="ordered locus">Plut_0011</name>
</gene>